<reference key="1">
    <citation type="journal article" date="2006" name="Genome Biol.">
        <title>The genome of Rhizobium leguminosarum has recognizable core and accessory components.</title>
        <authorList>
            <person name="Young J.P.W."/>
            <person name="Crossman L.C."/>
            <person name="Johnston A.W.B."/>
            <person name="Thomson N.R."/>
            <person name="Ghazoui Z.F."/>
            <person name="Hull K.H."/>
            <person name="Wexler M."/>
            <person name="Curson A.R.J."/>
            <person name="Todd J.D."/>
            <person name="Poole P.S."/>
            <person name="Mauchline T.H."/>
            <person name="East A.K."/>
            <person name="Quail M.A."/>
            <person name="Churcher C."/>
            <person name="Arrowsmith C."/>
            <person name="Cherevach I."/>
            <person name="Chillingworth T."/>
            <person name="Clarke K."/>
            <person name="Cronin A."/>
            <person name="Davis P."/>
            <person name="Fraser A."/>
            <person name="Hance Z."/>
            <person name="Hauser H."/>
            <person name="Jagels K."/>
            <person name="Moule S."/>
            <person name="Mungall K."/>
            <person name="Norbertczak H."/>
            <person name="Rabbinowitsch E."/>
            <person name="Sanders M."/>
            <person name="Simmonds M."/>
            <person name="Whitehead S."/>
            <person name="Parkhill J."/>
        </authorList>
    </citation>
    <scope>NUCLEOTIDE SEQUENCE [LARGE SCALE GENOMIC DNA]</scope>
    <source>
        <strain>DSM 114642 / LMG 32736 / 3841</strain>
    </source>
</reference>
<protein>
    <recommendedName>
        <fullName evidence="1">Peptidyl-tRNA hydrolase</fullName>
        <shortName evidence="1">Pth</shortName>
        <ecNumber evidence="1">3.1.1.29</ecNumber>
    </recommendedName>
</protein>
<keyword id="KW-0963">Cytoplasm</keyword>
<keyword id="KW-0378">Hydrolase</keyword>
<keyword id="KW-0694">RNA-binding</keyword>
<keyword id="KW-0820">tRNA-binding</keyword>
<gene>
    <name evidence="1" type="primary">pth</name>
    <name type="ordered locus">RL3474</name>
</gene>
<name>PTH_RHIJ3</name>
<feature type="chain" id="PRO_0000264088" description="Peptidyl-tRNA hydrolase">
    <location>
        <begin position="1"/>
        <end position="243"/>
    </location>
</feature>
<feature type="region of interest" description="Disordered" evidence="2">
    <location>
        <begin position="190"/>
        <end position="243"/>
    </location>
</feature>
<feature type="compositionally biased region" description="Basic and acidic residues" evidence="2">
    <location>
        <begin position="190"/>
        <end position="205"/>
    </location>
</feature>
<feature type="compositionally biased region" description="Polar residues" evidence="2">
    <location>
        <begin position="208"/>
        <end position="221"/>
    </location>
</feature>
<feature type="active site" description="Proton acceptor" evidence="1">
    <location>
        <position position="19"/>
    </location>
</feature>
<feature type="binding site" evidence="1">
    <location>
        <position position="14"/>
    </location>
    <ligand>
        <name>tRNA</name>
        <dbReference type="ChEBI" id="CHEBI:17843"/>
    </ligand>
</feature>
<feature type="binding site" evidence="1">
    <location>
        <position position="64"/>
    </location>
    <ligand>
        <name>tRNA</name>
        <dbReference type="ChEBI" id="CHEBI:17843"/>
    </ligand>
</feature>
<feature type="binding site" evidence="1">
    <location>
        <position position="66"/>
    </location>
    <ligand>
        <name>tRNA</name>
        <dbReference type="ChEBI" id="CHEBI:17843"/>
    </ligand>
</feature>
<feature type="binding site" evidence="1">
    <location>
        <position position="112"/>
    </location>
    <ligand>
        <name>tRNA</name>
        <dbReference type="ChEBI" id="CHEBI:17843"/>
    </ligand>
</feature>
<feature type="site" description="Discriminates between blocked and unblocked aminoacyl-tRNA" evidence="1">
    <location>
        <position position="9"/>
    </location>
</feature>
<feature type="site" description="Stabilizes the basic form of H active site to accept a proton" evidence="1">
    <location>
        <position position="91"/>
    </location>
</feature>
<accession>Q1MDL5</accession>
<organism>
    <name type="scientific">Rhizobium johnstonii (strain DSM 114642 / LMG 32736 / 3841)</name>
    <name type="common">Rhizobium leguminosarum bv. viciae</name>
    <dbReference type="NCBI Taxonomy" id="216596"/>
    <lineage>
        <taxon>Bacteria</taxon>
        <taxon>Pseudomonadati</taxon>
        <taxon>Pseudomonadota</taxon>
        <taxon>Alphaproteobacteria</taxon>
        <taxon>Hyphomicrobiales</taxon>
        <taxon>Rhizobiaceae</taxon>
        <taxon>Rhizobium/Agrobacterium group</taxon>
        <taxon>Rhizobium</taxon>
        <taxon>Rhizobium johnstonii</taxon>
    </lineage>
</organism>
<comment type="function">
    <text evidence="1">Hydrolyzes ribosome-free peptidyl-tRNAs (with 1 or more amino acids incorporated), which drop off the ribosome during protein synthesis, or as a result of ribosome stalling.</text>
</comment>
<comment type="function">
    <text evidence="1">Catalyzes the release of premature peptidyl moieties from peptidyl-tRNA molecules trapped in stalled 50S ribosomal subunits, and thus maintains levels of free tRNAs and 50S ribosomes.</text>
</comment>
<comment type="catalytic activity">
    <reaction evidence="1">
        <text>an N-acyl-L-alpha-aminoacyl-tRNA + H2O = an N-acyl-L-amino acid + a tRNA + H(+)</text>
        <dbReference type="Rhea" id="RHEA:54448"/>
        <dbReference type="Rhea" id="RHEA-COMP:10123"/>
        <dbReference type="Rhea" id="RHEA-COMP:13883"/>
        <dbReference type="ChEBI" id="CHEBI:15377"/>
        <dbReference type="ChEBI" id="CHEBI:15378"/>
        <dbReference type="ChEBI" id="CHEBI:59874"/>
        <dbReference type="ChEBI" id="CHEBI:78442"/>
        <dbReference type="ChEBI" id="CHEBI:138191"/>
        <dbReference type="EC" id="3.1.1.29"/>
    </reaction>
</comment>
<comment type="subunit">
    <text evidence="1">Monomer.</text>
</comment>
<comment type="subcellular location">
    <subcellularLocation>
        <location evidence="1">Cytoplasm</location>
    </subcellularLocation>
</comment>
<comment type="similarity">
    <text evidence="1">Belongs to the PTH family.</text>
</comment>
<proteinExistence type="inferred from homology"/>
<evidence type="ECO:0000255" key="1">
    <source>
        <dbReference type="HAMAP-Rule" id="MF_00083"/>
    </source>
</evidence>
<evidence type="ECO:0000256" key="2">
    <source>
        <dbReference type="SAM" id="MobiDB-lite"/>
    </source>
</evidence>
<sequence length="243" mass="26590">MLIIAGLGNPGGKYAGNRHNIGFMAVDAIHRRHGFSPWSKKFRAEIAEGEVGGEKVLLMKPQTFMNLSGESVGEAMRFYKLQPADLVAIYDELDLPQGKARLKTGGGHNGHNGIKSLDAHCGREYRRLRLGIGHPGIKDMVQNHVLGDFAKADKAWLEPLLDTLADNADMLVRNEDSQLMNKIALALGGKAEEEKPAKEMKDAGKKPASQSHIHQARNHNQPKLPATGPMADMLKKMFGKKGD</sequence>
<dbReference type="EC" id="3.1.1.29" evidence="1"/>
<dbReference type="EMBL" id="AM236080">
    <property type="protein sequence ID" value="CAK08962.1"/>
    <property type="molecule type" value="Genomic_DNA"/>
</dbReference>
<dbReference type="RefSeq" id="WP_011652951.1">
    <property type="nucleotide sequence ID" value="NC_008380.1"/>
</dbReference>
<dbReference type="SMR" id="Q1MDL5"/>
<dbReference type="EnsemblBacteria" id="CAK08962">
    <property type="protein sequence ID" value="CAK08962"/>
    <property type="gene ID" value="RL3474"/>
</dbReference>
<dbReference type="KEGG" id="rle:RL3474"/>
<dbReference type="eggNOG" id="COG0193">
    <property type="taxonomic scope" value="Bacteria"/>
</dbReference>
<dbReference type="HOGENOM" id="CLU_062456_1_1_5"/>
<dbReference type="Proteomes" id="UP000006575">
    <property type="component" value="Chromosome"/>
</dbReference>
<dbReference type="GO" id="GO:0005737">
    <property type="term" value="C:cytoplasm"/>
    <property type="evidence" value="ECO:0007669"/>
    <property type="project" value="UniProtKB-SubCell"/>
</dbReference>
<dbReference type="GO" id="GO:0004045">
    <property type="term" value="F:peptidyl-tRNA hydrolase activity"/>
    <property type="evidence" value="ECO:0007669"/>
    <property type="project" value="UniProtKB-UniRule"/>
</dbReference>
<dbReference type="GO" id="GO:0000049">
    <property type="term" value="F:tRNA binding"/>
    <property type="evidence" value="ECO:0007669"/>
    <property type="project" value="UniProtKB-UniRule"/>
</dbReference>
<dbReference type="GO" id="GO:0006515">
    <property type="term" value="P:protein quality control for misfolded or incompletely synthesized proteins"/>
    <property type="evidence" value="ECO:0007669"/>
    <property type="project" value="UniProtKB-UniRule"/>
</dbReference>
<dbReference type="GO" id="GO:0072344">
    <property type="term" value="P:rescue of stalled ribosome"/>
    <property type="evidence" value="ECO:0007669"/>
    <property type="project" value="UniProtKB-UniRule"/>
</dbReference>
<dbReference type="CDD" id="cd00462">
    <property type="entry name" value="PTH"/>
    <property type="match status" value="1"/>
</dbReference>
<dbReference type="FunFam" id="3.40.50.1470:FF:000001">
    <property type="entry name" value="Peptidyl-tRNA hydrolase"/>
    <property type="match status" value="1"/>
</dbReference>
<dbReference type="Gene3D" id="3.40.50.1470">
    <property type="entry name" value="Peptidyl-tRNA hydrolase"/>
    <property type="match status" value="1"/>
</dbReference>
<dbReference type="HAMAP" id="MF_00083">
    <property type="entry name" value="Pept_tRNA_hydro_bact"/>
    <property type="match status" value="1"/>
</dbReference>
<dbReference type="InterPro" id="IPR001328">
    <property type="entry name" value="Pept_tRNA_hydro"/>
</dbReference>
<dbReference type="InterPro" id="IPR018171">
    <property type="entry name" value="Pept_tRNA_hydro_CS"/>
</dbReference>
<dbReference type="InterPro" id="IPR036416">
    <property type="entry name" value="Pept_tRNA_hydro_sf"/>
</dbReference>
<dbReference type="NCBIfam" id="TIGR00447">
    <property type="entry name" value="pth"/>
    <property type="match status" value="1"/>
</dbReference>
<dbReference type="PANTHER" id="PTHR17224">
    <property type="entry name" value="PEPTIDYL-TRNA HYDROLASE"/>
    <property type="match status" value="1"/>
</dbReference>
<dbReference type="PANTHER" id="PTHR17224:SF1">
    <property type="entry name" value="PEPTIDYL-TRNA HYDROLASE"/>
    <property type="match status" value="1"/>
</dbReference>
<dbReference type="Pfam" id="PF01195">
    <property type="entry name" value="Pept_tRNA_hydro"/>
    <property type="match status" value="1"/>
</dbReference>
<dbReference type="SUPFAM" id="SSF53178">
    <property type="entry name" value="Peptidyl-tRNA hydrolase-like"/>
    <property type="match status" value="1"/>
</dbReference>
<dbReference type="PROSITE" id="PS01195">
    <property type="entry name" value="PEPT_TRNA_HYDROL_1"/>
    <property type="match status" value="1"/>
</dbReference>
<dbReference type="PROSITE" id="PS01196">
    <property type="entry name" value="PEPT_TRNA_HYDROL_2"/>
    <property type="match status" value="1"/>
</dbReference>